<gene>
    <name evidence="1" type="primary">prfA</name>
    <name type="ordered locus">Jann_1806</name>
</gene>
<organism>
    <name type="scientific">Jannaschia sp. (strain CCS1)</name>
    <dbReference type="NCBI Taxonomy" id="290400"/>
    <lineage>
        <taxon>Bacteria</taxon>
        <taxon>Pseudomonadati</taxon>
        <taxon>Pseudomonadota</taxon>
        <taxon>Alphaproteobacteria</taxon>
        <taxon>Rhodobacterales</taxon>
        <taxon>Roseobacteraceae</taxon>
        <taxon>Jannaschia</taxon>
    </lineage>
</organism>
<evidence type="ECO:0000255" key="1">
    <source>
        <dbReference type="HAMAP-Rule" id="MF_00093"/>
    </source>
</evidence>
<dbReference type="EMBL" id="CP000264">
    <property type="protein sequence ID" value="ABD54723.1"/>
    <property type="molecule type" value="Genomic_DNA"/>
</dbReference>
<dbReference type="RefSeq" id="WP_011454928.1">
    <property type="nucleotide sequence ID" value="NC_007802.1"/>
</dbReference>
<dbReference type="SMR" id="Q28RD9"/>
<dbReference type="STRING" id="290400.Jann_1806"/>
<dbReference type="KEGG" id="jan:Jann_1806"/>
<dbReference type="eggNOG" id="COG0216">
    <property type="taxonomic scope" value="Bacteria"/>
</dbReference>
<dbReference type="HOGENOM" id="CLU_036856_0_1_5"/>
<dbReference type="OrthoDB" id="9806673at2"/>
<dbReference type="Proteomes" id="UP000008326">
    <property type="component" value="Chromosome"/>
</dbReference>
<dbReference type="GO" id="GO:0005737">
    <property type="term" value="C:cytoplasm"/>
    <property type="evidence" value="ECO:0007669"/>
    <property type="project" value="UniProtKB-SubCell"/>
</dbReference>
<dbReference type="GO" id="GO:0016149">
    <property type="term" value="F:translation release factor activity, codon specific"/>
    <property type="evidence" value="ECO:0007669"/>
    <property type="project" value="UniProtKB-UniRule"/>
</dbReference>
<dbReference type="FunFam" id="3.30.160.20:FF:000004">
    <property type="entry name" value="Peptide chain release factor 1"/>
    <property type="match status" value="1"/>
</dbReference>
<dbReference type="FunFam" id="3.30.70.1660:FF:000002">
    <property type="entry name" value="Peptide chain release factor 1"/>
    <property type="match status" value="1"/>
</dbReference>
<dbReference type="FunFam" id="3.30.70.1660:FF:000004">
    <property type="entry name" value="Peptide chain release factor 1"/>
    <property type="match status" value="1"/>
</dbReference>
<dbReference type="Gene3D" id="3.30.160.20">
    <property type="match status" value="1"/>
</dbReference>
<dbReference type="Gene3D" id="3.30.70.1660">
    <property type="match status" value="2"/>
</dbReference>
<dbReference type="Gene3D" id="6.10.140.1950">
    <property type="match status" value="1"/>
</dbReference>
<dbReference type="HAMAP" id="MF_00093">
    <property type="entry name" value="Rel_fac_1"/>
    <property type="match status" value="1"/>
</dbReference>
<dbReference type="InterPro" id="IPR005139">
    <property type="entry name" value="PCRF"/>
</dbReference>
<dbReference type="InterPro" id="IPR000352">
    <property type="entry name" value="Pep_chain_release_fac_I"/>
</dbReference>
<dbReference type="InterPro" id="IPR045853">
    <property type="entry name" value="Pep_chain_release_fac_I_sf"/>
</dbReference>
<dbReference type="InterPro" id="IPR050057">
    <property type="entry name" value="Prokaryotic/Mito_RF"/>
</dbReference>
<dbReference type="InterPro" id="IPR004373">
    <property type="entry name" value="RF-1"/>
</dbReference>
<dbReference type="NCBIfam" id="TIGR00019">
    <property type="entry name" value="prfA"/>
    <property type="match status" value="1"/>
</dbReference>
<dbReference type="NCBIfam" id="NF001859">
    <property type="entry name" value="PRK00591.1"/>
    <property type="match status" value="1"/>
</dbReference>
<dbReference type="PANTHER" id="PTHR43804">
    <property type="entry name" value="LD18447P"/>
    <property type="match status" value="1"/>
</dbReference>
<dbReference type="PANTHER" id="PTHR43804:SF7">
    <property type="entry name" value="LD18447P"/>
    <property type="match status" value="1"/>
</dbReference>
<dbReference type="Pfam" id="PF03462">
    <property type="entry name" value="PCRF"/>
    <property type="match status" value="1"/>
</dbReference>
<dbReference type="Pfam" id="PF00472">
    <property type="entry name" value="RF-1"/>
    <property type="match status" value="1"/>
</dbReference>
<dbReference type="SMART" id="SM00937">
    <property type="entry name" value="PCRF"/>
    <property type="match status" value="1"/>
</dbReference>
<dbReference type="SUPFAM" id="SSF75620">
    <property type="entry name" value="Release factor"/>
    <property type="match status" value="1"/>
</dbReference>
<dbReference type="PROSITE" id="PS00745">
    <property type="entry name" value="RF_PROK_I"/>
    <property type="match status" value="1"/>
</dbReference>
<feature type="chain" id="PRO_0000263287" description="Peptide chain release factor 1">
    <location>
        <begin position="1"/>
        <end position="354"/>
    </location>
</feature>
<feature type="modified residue" description="N5-methylglutamine" evidence="1">
    <location>
        <position position="232"/>
    </location>
</feature>
<keyword id="KW-0963">Cytoplasm</keyword>
<keyword id="KW-0488">Methylation</keyword>
<keyword id="KW-0648">Protein biosynthesis</keyword>
<keyword id="KW-1185">Reference proteome</keyword>
<name>RF1_JANSC</name>
<comment type="function">
    <text evidence="1">Peptide chain release factor 1 directs the termination of translation in response to the peptide chain termination codons UAG and UAA.</text>
</comment>
<comment type="subcellular location">
    <subcellularLocation>
        <location evidence="1">Cytoplasm</location>
    </subcellularLocation>
</comment>
<comment type="PTM">
    <text evidence="1">Methylated by PrmC. Methylation increases the termination efficiency of RF1.</text>
</comment>
<comment type="similarity">
    <text evidence="1">Belongs to the prokaryotic/mitochondrial release factor family.</text>
</comment>
<accession>Q28RD9</accession>
<protein>
    <recommendedName>
        <fullName evidence="1">Peptide chain release factor 1</fullName>
        <shortName evidence="1">RF-1</shortName>
    </recommendedName>
</protein>
<sequence>MAATLPRDRLRQITDRFEYLEAQLNGGPDPSDIAKISREYAELKPVVAEIAGYEQLLADMAEAQNMLADPDMRPLAEEELPRLEAAIPAAEQSLQLALLPKDAADAKPAMIEIRPGTGGDEAALFAGDLLRMYTRYAEARGWRLEIVDLQESDLGGIKECTARVEGENVFARLKFESGVHRVQRVPETESGGRIHTSAATVAVLPEAEDVDIDIPATDIRIDTMRASGAGGQHVNTTDSAVRITHVPSGIVVVSSEKSQHRNREIAMQTLRTRLYDLERQKADDAMAADRKAQIGSGDRSERIRTYNFPQGRMTDHRINLTLYKLDAVMLGDLDEIVDALTAEDQAMKLAEMTG</sequence>
<reference key="1">
    <citation type="submission" date="2006-02" db="EMBL/GenBank/DDBJ databases">
        <title>Complete sequence of chromosome of Jannaschia sp. CCS1.</title>
        <authorList>
            <consortium name="US DOE Joint Genome Institute"/>
            <person name="Copeland A."/>
            <person name="Lucas S."/>
            <person name="Lapidus A."/>
            <person name="Barry K."/>
            <person name="Detter J.C."/>
            <person name="Glavina del Rio T."/>
            <person name="Hammon N."/>
            <person name="Israni S."/>
            <person name="Pitluck S."/>
            <person name="Brettin T."/>
            <person name="Bruce D."/>
            <person name="Han C."/>
            <person name="Tapia R."/>
            <person name="Gilna P."/>
            <person name="Chertkov O."/>
            <person name="Saunders E."/>
            <person name="Schmutz J."/>
            <person name="Larimer F."/>
            <person name="Land M."/>
            <person name="Kyrpides N."/>
            <person name="Lykidis A."/>
            <person name="Moran M.A."/>
            <person name="Belas R."/>
            <person name="Ye W."/>
            <person name="Buchan A."/>
            <person name="Gonzalez J.M."/>
            <person name="Schell M.A."/>
            <person name="Richardson P."/>
        </authorList>
    </citation>
    <scope>NUCLEOTIDE SEQUENCE [LARGE SCALE GENOMIC DNA]</scope>
    <source>
        <strain>CCS1</strain>
    </source>
</reference>
<proteinExistence type="inferred from homology"/>